<feature type="chain" id="PRO_0000101284" description="5'-3' exonuclease">
    <location>
        <begin position="1"/>
        <end position="287"/>
    </location>
</feature>
<feature type="domain" description="5'-3' exonuclease" evidence="2">
    <location>
        <begin position="172"/>
        <end position="270"/>
    </location>
</feature>
<accession>Q8K9D0</accession>
<gene>
    <name type="primary">pol</name>
    <name type="ordered locus">BUsg_416</name>
</gene>
<organism>
    <name type="scientific">Buchnera aphidicola subsp. Schizaphis graminum (strain Sg)</name>
    <dbReference type="NCBI Taxonomy" id="198804"/>
    <lineage>
        <taxon>Bacteria</taxon>
        <taxon>Pseudomonadati</taxon>
        <taxon>Pseudomonadota</taxon>
        <taxon>Gammaproteobacteria</taxon>
        <taxon>Enterobacterales</taxon>
        <taxon>Erwiniaceae</taxon>
        <taxon>Buchnera</taxon>
    </lineage>
</organism>
<sequence length="287" mass="33047">MPYTKKKPIIIVDGSLYLYRSYFTFQNFNSNEENPSGAIYGMLKTIQNILNKNYNSKKIIIIFDSSKKNFRNTIFKEYKSNRSAMPNKLYVQIQPLFKILEEIGIKTLSILGIEADDIIGSLAYKLEQKGEQVLIVSHDKDMIQLITDNINVLNISKNSILTPEKIQEKYGIYPKEFIDLLALMGDSSDNIPGVPKIGIKTALFLLKKFSNIKNIYNNIEKIQSLPFRNAKNAAIQLKNYKKTAFLSYQLAKIKLDVPINITSEEITLKKTCFKKLSNLIRWYSFNE</sequence>
<dbReference type="EC" id="3.1.11.-"/>
<dbReference type="EMBL" id="AE013218">
    <property type="protein sequence ID" value="AAM67961.1"/>
    <property type="molecule type" value="Genomic_DNA"/>
</dbReference>
<dbReference type="RefSeq" id="WP_011053928.1">
    <property type="nucleotide sequence ID" value="NC_004061.1"/>
</dbReference>
<dbReference type="SMR" id="Q8K9D0"/>
<dbReference type="STRING" id="198804.BUsg_416"/>
<dbReference type="GeneID" id="93003888"/>
<dbReference type="KEGG" id="bas:BUsg_416"/>
<dbReference type="eggNOG" id="COG0258">
    <property type="taxonomic scope" value="Bacteria"/>
</dbReference>
<dbReference type="HOGENOM" id="CLU_004675_1_0_6"/>
<dbReference type="Proteomes" id="UP000000416">
    <property type="component" value="Chromosome"/>
</dbReference>
<dbReference type="GO" id="GO:0008409">
    <property type="term" value="F:5'-3' exonuclease activity"/>
    <property type="evidence" value="ECO:0007669"/>
    <property type="project" value="InterPro"/>
</dbReference>
<dbReference type="GO" id="GO:0017108">
    <property type="term" value="F:5'-flap endonuclease activity"/>
    <property type="evidence" value="ECO:0007669"/>
    <property type="project" value="InterPro"/>
</dbReference>
<dbReference type="GO" id="GO:0003677">
    <property type="term" value="F:DNA binding"/>
    <property type="evidence" value="ECO:0007669"/>
    <property type="project" value="UniProtKB-KW"/>
</dbReference>
<dbReference type="GO" id="GO:0033567">
    <property type="term" value="P:DNA replication, Okazaki fragment processing"/>
    <property type="evidence" value="ECO:0007669"/>
    <property type="project" value="InterPro"/>
</dbReference>
<dbReference type="CDD" id="cd09898">
    <property type="entry name" value="H3TH_53EXO"/>
    <property type="match status" value="1"/>
</dbReference>
<dbReference type="CDD" id="cd09859">
    <property type="entry name" value="PIN_53EXO"/>
    <property type="match status" value="1"/>
</dbReference>
<dbReference type="FunFam" id="1.10.150.20:FF:000003">
    <property type="entry name" value="DNA polymerase I"/>
    <property type="match status" value="1"/>
</dbReference>
<dbReference type="Gene3D" id="1.10.150.20">
    <property type="entry name" value="5' to 3' exonuclease, C-terminal subdomain"/>
    <property type="match status" value="1"/>
</dbReference>
<dbReference type="Gene3D" id="3.40.50.1010">
    <property type="entry name" value="5'-nuclease"/>
    <property type="match status" value="1"/>
</dbReference>
<dbReference type="InterPro" id="IPR020046">
    <property type="entry name" value="5-3_exonucl_a-hlix_arch_N"/>
</dbReference>
<dbReference type="InterPro" id="IPR002421">
    <property type="entry name" value="5-3_exonuclease"/>
</dbReference>
<dbReference type="InterPro" id="IPR036279">
    <property type="entry name" value="5-3_exonuclease_C_sf"/>
</dbReference>
<dbReference type="InterPro" id="IPR020045">
    <property type="entry name" value="DNA_polI_H3TH"/>
</dbReference>
<dbReference type="InterPro" id="IPR038969">
    <property type="entry name" value="FEN"/>
</dbReference>
<dbReference type="InterPro" id="IPR008918">
    <property type="entry name" value="HhH2"/>
</dbReference>
<dbReference type="InterPro" id="IPR029060">
    <property type="entry name" value="PIN-like_dom_sf"/>
</dbReference>
<dbReference type="NCBIfam" id="NF011545">
    <property type="entry name" value="PRK14976.1-2"/>
    <property type="match status" value="1"/>
</dbReference>
<dbReference type="PANTHER" id="PTHR42646:SF2">
    <property type="entry name" value="5'-3' EXONUCLEASE FAMILY PROTEIN"/>
    <property type="match status" value="1"/>
</dbReference>
<dbReference type="PANTHER" id="PTHR42646">
    <property type="entry name" value="FLAP ENDONUCLEASE XNI"/>
    <property type="match status" value="1"/>
</dbReference>
<dbReference type="Pfam" id="PF01367">
    <property type="entry name" value="5_3_exonuc"/>
    <property type="match status" value="1"/>
</dbReference>
<dbReference type="Pfam" id="PF02739">
    <property type="entry name" value="5_3_exonuc_N"/>
    <property type="match status" value="1"/>
</dbReference>
<dbReference type="SMART" id="SM00475">
    <property type="entry name" value="53EXOc"/>
    <property type="match status" value="1"/>
</dbReference>
<dbReference type="SMART" id="SM00279">
    <property type="entry name" value="HhH2"/>
    <property type="match status" value="1"/>
</dbReference>
<dbReference type="SUPFAM" id="SSF47807">
    <property type="entry name" value="5' to 3' exonuclease, C-terminal subdomain"/>
    <property type="match status" value="1"/>
</dbReference>
<dbReference type="SUPFAM" id="SSF88723">
    <property type="entry name" value="PIN domain-like"/>
    <property type="match status" value="1"/>
</dbReference>
<name>EX53_BUCAP</name>
<protein>
    <recommendedName>
        <fullName>5'-3' exonuclease</fullName>
        <ecNumber>3.1.11.-</ecNumber>
    </recommendedName>
</protein>
<evidence type="ECO:0000250" key="1"/>
<evidence type="ECO:0000255" key="2"/>
<reference key="1">
    <citation type="journal article" date="2002" name="Science">
        <title>50 million years of genomic stasis in endosymbiotic bacteria.</title>
        <authorList>
            <person name="Tamas I."/>
            <person name="Klasson L."/>
            <person name="Canbaeck B."/>
            <person name="Naeslund A.K."/>
            <person name="Eriksson A.-S."/>
            <person name="Wernegreen J.J."/>
            <person name="Sandstroem J.P."/>
            <person name="Moran N.A."/>
            <person name="Andersson S.G.E."/>
        </authorList>
    </citation>
    <scope>NUCLEOTIDE SEQUENCE [LARGE SCALE GENOMIC DNA]</scope>
    <source>
        <strain>Sg</strain>
    </source>
</reference>
<comment type="function">
    <text evidence="1">5'-3' exonuclease acting preferentially on double-stranded DNA.</text>
</comment>
<proteinExistence type="inferred from homology"/>
<keyword id="KW-0238">DNA-binding</keyword>
<keyword id="KW-0269">Exonuclease</keyword>
<keyword id="KW-0378">Hydrolase</keyword>
<keyword id="KW-0540">Nuclease</keyword>